<protein>
    <recommendedName>
        <fullName>Prostate-associated microseminoprotein</fullName>
    </recommendedName>
    <alternativeName>
        <fullName>PC3-secreted microprotein homolog</fullName>
    </alternativeName>
</protein>
<accession>B1AWI6</accession>
<reference key="1">
    <citation type="journal article" date="2009" name="PLoS Biol.">
        <title>Lineage-specific biology revealed by a finished genome assembly of the mouse.</title>
        <authorList>
            <person name="Church D.M."/>
            <person name="Goodstadt L."/>
            <person name="Hillier L.W."/>
            <person name="Zody M.C."/>
            <person name="Goldstein S."/>
            <person name="She X."/>
            <person name="Bult C.J."/>
            <person name="Agarwala R."/>
            <person name="Cherry J.L."/>
            <person name="DiCuccio M."/>
            <person name="Hlavina W."/>
            <person name="Kapustin Y."/>
            <person name="Meric P."/>
            <person name="Maglott D."/>
            <person name="Birtle Z."/>
            <person name="Marques A.C."/>
            <person name="Graves T."/>
            <person name="Zhou S."/>
            <person name="Teague B."/>
            <person name="Potamousis K."/>
            <person name="Churas C."/>
            <person name="Place M."/>
            <person name="Herschleb J."/>
            <person name="Runnheim R."/>
            <person name="Forrest D."/>
            <person name="Amos-Landgraf J."/>
            <person name="Schwartz D.C."/>
            <person name="Cheng Z."/>
            <person name="Lindblad-Toh K."/>
            <person name="Eichler E.E."/>
            <person name="Ponting C.P."/>
        </authorList>
    </citation>
    <scope>NUCLEOTIDE SEQUENCE [LARGE SCALE GENOMIC DNA]</scope>
    <source>
        <strain>C57BL/6J</strain>
    </source>
</reference>
<name>MSMP_MOUSE</name>
<gene>
    <name type="primary">Msmp</name>
    <name type="synonym">Psmp</name>
</gene>
<keyword id="KW-0145">Chemotaxis</keyword>
<keyword id="KW-0202">Cytokine</keyword>
<keyword id="KW-1015">Disulfide bond</keyword>
<keyword id="KW-0395">Inflammatory response</keyword>
<keyword id="KW-1185">Reference proteome</keyword>
<keyword id="KW-0964">Secreted</keyword>
<keyword id="KW-0732">Signal</keyword>
<comment type="function">
    <text evidence="2">Acts as a ligand for C-C chemokine receptor CCR2 (By similarity). Signals through binding and activation of CCR2 and induces a strong chemotactic response and mobilization of intracellular calcium ions (By similarity). Exhibits a chemotactic activity for monocytes and lymphocytes but not neutrophils (By similarity).</text>
</comment>
<comment type="subcellular location">
    <subcellularLocation>
        <location evidence="2">Secreted</location>
    </subcellularLocation>
</comment>
<comment type="similarity">
    <text evidence="5">Belongs to the beta-microseminoprotein family.</text>
</comment>
<sequence>MALRMLWAGQAKGILGGWRTICLVVSLFLQHPGVSSKCYFQAQAPCHYEGKYFTLGESWLRKDCFHCTCLHPVGVGCCDTAQHPIDFPAECEVLQEAGTCQFSLVQKADPRLPCKGGGPDLEWGSANTPAPGASAPHSS</sequence>
<proteinExistence type="inferred from homology"/>
<dbReference type="EMBL" id="AL732626">
    <property type="status" value="NOT_ANNOTATED_CDS"/>
    <property type="molecule type" value="Genomic_DNA"/>
</dbReference>
<dbReference type="CCDS" id="CCDS51167.1"/>
<dbReference type="RefSeq" id="NP_001092784.1">
    <property type="nucleotide sequence ID" value="NM_001099314.1"/>
</dbReference>
<dbReference type="SMR" id="B1AWI6"/>
<dbReference type="FunCoup" id="B1AWI6">
    <property type="interactions" value="166"/>
</dbReference>
<dbReference type="STRING" id="10090.ENSMUSP00000103516"/>
<dbReference type="PhosphoSitePlus" id="B1AWI6"/>
<dbReference type="PaxDb" id="10090-ENSMUSP00000103516"/>
<dbReference type="ProteomicsDB" id="290064"/>
<dbReference type="Antibodypedia" id="56375">
    <property type="antibodies" value="14 antibodies from 8 providers"/>
</dbReference>
<dbReference type="Ensembl" id="ENSMUST00000107884.3">
    <property type="protein sequence ID" value="ENSMUSP00000103516.3"/>
    <property type="gene ID" value="ENSMUSG00000078719.3"/>
</dbReference>
<dbReference type="GeneID" id="100039672"/>
<dbReference type="KEGG" id="mmu:100039672"/>
<dbReference type="UCSC" id="uc008sql.1">
    <property type="organism name" value="mouse"/>
</dbReference>
<dbReference type="AGR" id="MGI:3652339"/>
<dbReference type="CTD" id="692094"/>
<dbReference type="MGI" id="MGI:3652339">
    <property type="gene designation" value="Msmp"/>
</dbReference>
<dbReference type="VEuPathDB" id="HostDB:ENSMUSG00000078719"/>
<dbReference type="eggNOG" id="ENOG502SBBR">
    <property type="taxonomic scope" value="Eukaryota"/>
</dbReference>
<dbReference type="GeneTree" id="ENSGT00940000154371"/>
<dbReference type="HOGENOM" id="CLU_153313_0_0_1"/>
<dbReference type="InParanoid" id="B1AWI6"/>
<dbReference type="OMA" id="DLEWGSA"/>
<dbReference type="OrthoDB" id="8452296at2759"/>
<dbReference type="PhylomeDB" id="B1AWI6"/>
<dbReference type="TreeFam" id="TF338336"/>
<dbReference type="BioGRID-ORCS" id="100039672">
    <property type="hits" value="2 hits in 44 CRISPR screens"/>
</dbReference>
<dbReference type="PRO" id="PR:B1AWI6"/>
<dbReference type="Proteomes" id="UP000000589">
    <property type="component" value="Chromosome 4"/>
</dbReference>
<dbReference type="RNAct" id="B1AWI6">
    <property type="molecule type" value="protein"/>
</dbReference>
<dbReference type="Bgee" id="ENSMUSG00000078719">
    <property type="expression patterns" value="Expressed in embryonic post-anal tail and 43 other cell types or tissues"/>
</dbReference>
<dbReference type="GO" id="GO:0005737">
    <property type="term" value="C:cytoplasm"/>
    <property type="evidence" value="ECO:0007669"/>
    <property type="project" value="Ensembl"/>
</dbReference>
<dbReference type="GO" id="GO:0005615">
    <property type="term" value="C:extracellular space"/>
    <property type="evidence" value="ECO:0000250"/>
    <property type="project" value="UniProtKB"/>
</dbReference>
<dbReference type="GO" id="GO:0031727">
    <property type="term" value="F:CCR2 chemokine receptor binding"/>
    <property type="evidence" value="ECO:0000250"/>
    <property type="project" value="UniProtKB"/>
</dbReference>
<dbReference type="GO" id="GO:0005125">
    <property type="term" value="F:cytokine activity"/>
    <property type="evidence" value="ECO:0007669"/>
    <property type="project" value="UniProtKB-KW"/>
</dbReference>
<dbReference type="GO" id="GO:0006954">
    <property type="term" value="P:inflammatory response"/>
    <property type="evidence" value="ECO:0007669"/>
    <property type="project" value="UniProtKB-KW"/>
</dbReference>
<dbReference type="GO" id="GO:0048247">
    <property type="term" value="P:lymphocyte chemotaxis"/>
    <property type="evidence" value="ECO:0000250"/>
    <property type="project" value="UniProtKB"/>
</dbReference>
<dbReference type="GO" id="GO:0002548">
    <property type="term" value="P:monocyte chemotaxis"/>
    <property type="evidence" value="ECO:0000250"/>
    <property type="project" value="UniProtKB"/>
</dbReference>
<dbReference type="FunFam" id="2.60.40.1900:FF:000001">
    <property type="entry name" value="Beta-microseminoprotein"/>
    <property type="match status" value="1"/>
</dbReference>
<dbReference type="Gene3D" id="2.60.40.1900">
    <property type="entry name" value="Beta-microseminoprotein (PSP94) domain"/>
    <property type="match status" value="1"/>
</dbReference>
<dbReference type="InterPro" id="IPR008735">
    <property type="entry name" value="PSP94"/>
</dbReference>
<dbReference type="PANTHER" id="PTHR10500">
    <property type="entry name" value="BETA-MICROSEMINOPROTEIN"/>
    <property type="match status" value="1"/>
</dbReference>
<dbReference type="PANTHER" id="PTHR10500:SF4">
    <property type="entry name" value="PROSTATE-ASSOCIATED MICROSEMINOPROTEIN"/>
    <property type="match status" value="1"/>
</dbReference>
<dbReference type="Pfam" id="PF05825">
    <property type="entry name" value="PSP94"/>
    <property type="match status" value="1"/>
</dbReference>
<feature type="signal peptide" evidence="3">
    <location>
        <begin position="1"/>
        <end position="35"/>
    </location>
</feature>
<feature type="chain" id="PRO_0000338649" description="Prostate-associated microseminoprotein">
    <location>
        <begin position="36"/>
        <end position="139"/>
    </location>
</feature>
<feature type="region of interest" description="Disordered" evidence="4">
    <location>
        <begin position="116"/>
        <end position="139"/>
    </location>
</feature>
<feature type="disulfide bond" evidence="1">
    <location>
        <begin position="38"/>
        <end position="78"/>
    </location>
</feature>
<feature type="disulfide bond" evidence="1">
    <location>
        <begin position="46"/>
        <end position="69"/>
    </location>
</feature>
<feature type="disulfide bond" evidence="1">
    <location>
        <begin position="64"/>
        <end position="100"/>
    </location>
</feature>
<feature type="disulfide bond" evidence="1">
    <location>
        <begin position="67"/>
        <end position="77"/>
    </location>
</feature>
<feature type="disulfide bond" evidence="1">
    <location>
        <begin position="91"/>
        <end position="114"/>
    </location>
</feature>
<organism>
    <name type="scientific">Mus musculus</name>
    <name type="common">Mouse</name>
    <dbReference type="NCBI Taxonomy" id="10090"/>
    <lineage>
        <taxon>Eukaryota</taxon>
        <taxon>Metazoa</taxon>
        <taxon>Chordata</taxon>
        <taxon>Craniata</taxon>
        <taxon>Vertebrata</taxon>
        <taxon>Euteleostomi</taxon>
        <taxon>Mammalia</taxon>
        <taxon>Eutheria</taxon>
        <taxon>Euarchontoglires</taxon>
        <taxon>Glires</taxon>
        <taxon>Rodentia</taxon>
        <taxon>Myomorpha</taxon>
        <taxon>Muroidea</taxon>
        <taxon>Muridae</taxon>
        <taxon>Murinae</taxon>
        <taxon>Mus</taxon>
        <taxon>Mus</taxon>
    </lineage>
</organism>
<evidence type="ECO:0000250" key="1">
    <source>
        <dbReference type="UniProtKB" id="P08118"/>
    </source>
</evidence>
<evidence type="ECO:0000250" key="2">
    <source>
        <dbReference type="UniProtKB" id="Q1L6U9"/>
    </source>
</evidence>
<evidence type="ECO:0000255" key="3"/>
<evidence type="ECO:0000256" key="4">
    <source>
        <dbReference type="SAM" id="MobiDB-lite"/>
    </source>
</evidence>
<evidence type="ECO:0000305" key="5"/>